<protein>
    <recommendedName>
        <fullName>Uperin-2.1</fullName>
    </recommendedName>
</protein>
<reference key="1">
    <citation type="journal article" date="1996" name="Aust. J. Chem.">
        <title>Novel uperin peptides from the dorsal glands of the australian floodplain toadlet Uperoleia inundata.</title>
        <authorList>
            <person name="Bradford A.M."/>
            <person name="Raftery M.J."/>
            <person name="Bowie J.H."/>
            <person name="Tyler M.J."/>
            <person name="Wallace J.C."/>
            <person name="Adams G.W."/>
            <person name="Severini C."/>
        </authorList>
    </citation>
    <scope>PROTEIN SEQUENCE</scope>
    <scope>MASS SPECTROMETRY</scope>
    <source>
        <tissue>Skin secretion</tissue>
    </source>
</reference>
<evidence type="ECO:0000269" key="1">
    <source ref="1"/>
</evidence>
<name>UPE21_UPEIN</name>
<accession>P82027</accession>
<organism>
    <name type="scientific">Uperoleia inundata</name>
    <name type="common">Floodplain toadlet</name>
    <dbReference type="NCBI Taxonomy" id="104953"/>
    <lineage>
        <taxon>Eukaryota</taxon>
        <taxon>Metazoa</taxon>
        <taxon>Chordata</taxon>
        <taxon>Craniata</taxon>
        <taxon>Vertebrata</taxon>
        <taxon>Euteleostomi</taxon>
        <taxon>Amphibia</taxon>
        <taxon>Batrachia</taxon>
        <taxon>Anura</taxon>
        <taxon>Neobatrachia</taxon>
        <taxon>Myobatrachoidea</taxon>
        <taxon>Myobatrachidae</taxon>
        <taxon>Myobatrachinae</taxon>
        <taxon>Uperoleia</taxon>
    </lineage>
</organism>
<dbReference type="GO" id="GO:0005576">
    <property type="term" value="C:extracellular region"/>
    <property type="evidence" value="ECO:0007669"/>
    <property type="project" value="UniProtKB-SubCell"/>
</dbReference>
<dbReference type="GO" id="GO:0042742">
    <property type="term" value="P:defense response to bacterium"/>
    <property type="evidence" value="ECO:0007669"/>
    <property type="project" value="UniProtKB-KW"/>
</dbReference>
<dbReference type="InterPro" id="IPR013157">
    <property type="entry name" value="Aurein_antimicrobial_peptide"/>
</dbReference>
<dbReference type="Pfam" id="PF08256">
    <property type="entry name" value="Antimicrobial20"/>
    <property type="match status" value="1"/>
</dbReference>
<proteinExistence type="evidence at protein level"/>
<comment type="function">
    <text>Shows a medium antibacterial activity against L.mesenteriodes, M.luteus and S.uberis.</text>
</comment>
<comment type="subcellular location">
    <subcellularLocation>
        <location>Secreted</location>
    </subcellularLocation>
</comment>
<comment type="tissue specificity">
    <text>Expressed by the skin dorsal glands.</text>
</comment>
<comment type="mass spectrometry" mass="1926.0" method="FAB" evidence="1"/>
<keyword id="KW-0878">Amphibian defense peptide</keyword>
<keyword id="KW-0044">Antibiotic</keyword>
<keyword id="KW-0929">Antimicrobial</keyword>
<keyword id="KW-0903">Direct protein sequencing</keyword>
<keyword id="KW-0964">Secreted</keyword>
<sequence length="19" mass="1927">GIVDFAKKVVGGIRNALGI</sequence>
<feature type="peptide" id="PRO_0000043846" description="Uperin-2.1">
    <location>
        <begin position="1"/>
        <end position="19"/>
    </location>
</feature>